<protein>
    <recommendedName>
        <fullName evidence="5 6">Protein SNORC</fullName>
    </recommendedName>
    <alternativeName>
        <fullName evidence="5 6">Secondary ossification center-associated regulator of chondrocyte maturation protein</fullName>
    </alternativeName>
</protein>
<comment type="function">
    <text evidence="1">Plays a role in the regulation of chondrocyte maturation and postnatal endochondral ossification. May inhibit cell growth stimulation induced by FGF2.</text>
</comment>
<comment type="subunit">
    <text evidence="1">Interacts (via the extracellular domain) with FGF2.</text>
</comment>
<comment type="interaction">
    <interactant intactId="EBI-11957067">
        <id>Q6UX34</id>
    </interactant>
    <interactant intactId="EBI-13059134">
        <id>Q13520</id>
        <label>AQP6</label>
    </interactant>
    <organismsDiffer>false</organismsDiffer>
    <experiments>3</experiments>
</comment>
<comment type="interaction">
    <interactant intactId="EBI-11957067">
        <id>Q6UX34</id>
    </interactant>
    <interactant intactId="EBI-6657396">
        <id>P19397</id>
        <label>CD53</label>
    </interactant>
    <organismsDiffer>false</organismsDiffer>
    <experiments>3</experiments>
</comment>
<comment type="interaction">
    <interactant intactId="EBI-11957067">
        <id>Q6UX34</id>
    </interactant>
    <interactant intactId="EBI-1045797">
        <id>Q8N5K1</id>
        <label>CISD2</label>
    </interactant>
    <organismsDiffer>false</organismsDiffer>
    <experiments>3</experiments>
</comment>
<comment type="interaction">
    <interactant intactId="EBI-11957067">
        <id>Q6UX34</id>
    </interactant>
    <interactant intactId="EBI-3915253">
        <id>Q15125</id>
        <label>EBP</label>
    </interactant>
    <organismsDiffer>false</organismsDiffer>
    <experiments>3</experiments>
</comment>
<comment type="interaction">
    <interactant intactId="EBI-11957067">
        <id>Q6UX34</id>
    </interactant>
    <interactant intactId="EBI-18535450">
        <id>Q9GZR5</id>
        <label>ELOVL4</label>
    </interactant>
    <organismsDiffer>false</organismsDiffer>
    <experiments>3</experiments>
</comment>
<comment type="interaction">
    <interactant intactId="EBI-11957067">
        <id>Q6UX34</id>
    </interactant>
    <interactant intactId="EBI-781551">
        <id>Q9Y282</id>
        <label>ERGIC3</label>
    </interactant>
    <organismsDiffer>false</organismsDiffer>
    <experiments>3</experiments>
</comment>
<comment type="interaction">
    <interactant intactId="EBI-11957067">
        <id>Q6UX34</id>
    </interactant>
    <interactant intactId="EBI-18304435">
        <id>Q5JX71</id>
        <label>FAM209A</label>
    </interactant>
    <organismsDiffer>false</organismsDiffer>
    <experiments>3</experiments>
</comment>
<comment type="interaction">
    <interactant intactId="EBI-11957067">
        <id>Q6UX34</id>
    </interactant>
    <interactant intactId="EBI-11721746">
        <id>Q8TED1</id>
        <label>GPX8</label>
    </interactant>
    <organismsDiffer>false</organismsDiffer>
    <experiments>3</experiments>
</comment>
<comment type="interaction">
    <interactant intactId="EBI-11957067">
        <id>Q6UX34</id>
    </interactant>
    <interactant intactId="EBI-11427100">
        <id>P31937</id>
        <label>HIBADH</label>
    </interactant>
    <organismsDiffer>false</organismsDiffer>
    <experiments>3</experiments>
</comment>
<comment type="interaction">
    <interactant intactId="EBI-11957067">
        <id>Q6UX34</id>
    </interactant>
    <interactant intactId="EBI-18053395">
        <id>Q7Z5P4</id>
        <label>HSD17B13</label>
    </interactant>
    <organismsDiffer>false</organismsDiffer>
    <experiments>3</experiments>
</comment>
<comment type="interaction">
    <interactant intactId="EBI-11957067">
        <id>Q6UX34</id>
    </interactant>
    <interactant intactId="EBI-8632435">
        <id>P43628</id>
        <label>KIR2DL3</label>
    </interactant>
    <organismsDiffer>false</organismsDiffer>
    <experiments>3</experiments>
</comment>
<comment type="interaction">
    <interactant intactId="EBI-11957067">
        <id>Q6UX34</id>
    </interactant>
    <interactant intactId="EBI-17566767">
        <id>Q6ZUX7</id>
        <label>LHFPL2</label>
    </interactant>
    <organismsDiffer>false</organismsDiffer>
    <experiments>3</experiments>
</comment>
<comment type="interaction">
    <interactant intactId="EBI-11957067">
        <id>Q6UX34</id>
    </interactant>
    <interactant intactId="EBI-358888">
        <id>Q96AG4</id>
        <label>LRRC59</label>
    </interactant>
    <organismsDiffer>false</organismsDiffer>
    <experiments>3</experiments>
</comment>
<comment type="interaction">
    <interactant intactId="EBI-11957067">
        <id>Q6UX34</id>
    </interactant>
    <interactant intactId="EBI-724754">
        <id>O14880</id>
        <label>MGST3</label>
    </interactant>
    <organismsDiffer>false</organismsDiffer>
    <experiments>3</experiments>
</comment>
<comment type="interaction">
    <interactant intactId="EBI-11957067">
        <id>Q6UX34</id>
    </interactant>
    <interactant intactId="EBI-18159983">
        <id>Q3KNW5</id>
        <label>SLC10A6</label>
    </interactant>
    <organismsDiffer>false</organismsDiffer>
    <experiments>3</experiments>
</comment>
<comment type="interaction">
    <interactant intactId="EBI-11957067">
        <id>Q6UX34</id>
    </interactant>
    <interactant intactId="EBI-19141793">
        <id>Q13336-2</id>
        <label>SLC14A1</label>
    </interactant>
    <organismsDiffer>false</organismsDiffer>
    <experiments>3</experiments>
</comment>
<comment type="interaction">
    <interactant intactId="EBI-11957067">
        <id>Q6UX34</id>
    </interactant>
    <interactant intactId="EBI-12814225">
        <id>Q9BXS9-3</id>
        <label>SLC26A6</label>
    </interactant>
    <organismsDiffer>false</organismsDiffer>
    <experiments>3</experiments>
</comment>
<comment type="interaction">
    <interactant intactId="EBI-11957067">
        <id>Q6UX34</id>
    </interactant>
    <interactant intactId="EBI-13292283">
        <id>Q9UHI5</id>
        <label>SLC7A8</label>
    </interactant>
    <organismsDiffer>false</organismsDiffer>
    <experiments>3</experiments>
</comment>
<comment type="interaction">
    <interactant intactId="EBI-11957067">
        <id>Q6UX34</id>
    </interactant>
    <interactant intactId="EBI-712466">
        <id>Q16623</id>
        <label>STX1A</label>
    </interactant>
    <organismsDiffer>false</organismsDiffer>
    <experiments>3</experiments>
</comment>
<comment type="interaction">
    <interactant intactId="EBI-11957067">
        <id>Q6UX34</id>
    </interactant>
    <interactant intactId="EBI-3923061">
        <id>Q96B21</id>
        <label>TMEM45B</label>
    </interactant>
    <organismsDiffer>false</organismsDiffer>
    <experiments>3</experiments>
</comment>
<comment type="interaction">
    <interactant intactId="EBI-11957067">
        <id>Q6UX34</id>
    </interactant>
    <interactant intactId="EBI-2548832">
        <id>Q8N661</id>
        <label>TMEM86B</label>
    </interactant>
    <organismsDiffer>false</organismsDiffer>
    <experiments>3</experiments>
</comment>
<comment type="interaction">
    <interactant intactId="EBI-11957067">
        <id>Q6UX34</id>
    </interactant>
    <interactant intactId="EBI-12837904">
        <id>Q96MV8</id>
        <label>ZDHHC15</label>
    </interactant>
    <organismsDiffer>false</organismsDiffer>
    <experiments>3</experiments>
</comment>
<comment type="subcellular location">
    <subcellularLocation>
        <location evidence="6">Membrane</location>
        <topology evidence="6">Single-pass membrane protein</topology>
    </subcellularLocation>
    <subcellularLocation>
        <location evidence="1">Cytoplasm</location>
    </subcellularLocation>
    <subcellularLocation>
        <location evidence="1">Secreted</location>
        <location evidence="1">Extracellular space</location>
        <location evidence="1">Extracellular matrix</location>
    </subcellularLocation>
    <text evidence="1">Appears as reticular-like structures throughout the cytoplasm and adjacent to the plasma membrane. In proliferation and hypertrophic chondrocytes, detected intracellulary and in the pericellular extracellular matrix. In primary spongiosa, detected only in the extracellular matrix.</text>
</comment>
<comment type="tissue specificity">
    <text evidence="4">Expressed in cartilage.</text>
</comment>
<keyword id="KW-0963">Cytoplasm</keyword>
<keyword id="KW-0272">Extracellular matrix</keyword>
<keyword id="KW-0472">Membrane</keyword>
<keyword id="KW-1267">Proteomics identification</keyword>
<keyword id="KW-1185">Reference proteome</keyword>
<keyword id="KW-0964">Secreted</keyword>
<keyword id="KW-0732">Signal</keyword>
<keyword id="KW-0812">Transmembrane</keyword>
<keyword id="KW-1133">Transmembrane helix</keyword>
<evidence type="ECO:0000250" key="1">
    <source>
        <dbReference type="UniProtKB" id="Q9CXL7"/>
    </source>
</evidence>
<evidence type="ECO:0000255" key="2"/>
<evidence type="ECO:0000256" key="3">
    <source>
        <dbReference type="SAM" id="MobiDB-lite"/>
    </source>
</evidence>
<evidence type="ECO:0000269" key="4">
    <source>
    </source>
</evidence>
<evidence type="ECO:0000303" key="5">
    <source>
    </source>
</evidence>
<evidence type="ECO:0000305" key="6"/>
<evidence type="ECO:0000312" key="7">
    <source>
        <dbReference type="HGNC" id="HGNC:33763"/>
    </source>
</evidence>
<accession>Q6UX34</accession>
<reference key="1">
    <citation type="journal article" date="2003" name="Genome Res.">
        <title>The secreted protein discovery initiative (SPDI), a large-scale effort to identify novel human secreted and transmembrane proteins: a bioinformatics assessment.</title>
        <authorList>
            <person name="Clark H.F."/>
            <person name="Gurney A.L."/>
            <person name="Abaya E."/>
            <person name="Baker K."/>
            <person name="Baldwin D.T."/>
            <person name="Brush J."/>
            <person name="Chen J."/>
            <person name="Chow B."/>
            <person name="Chui C."/>
            <person name="Crowley C."/>
            <person name="Currell B."/>
            <person name="Deuel B."/>
            <person name="Dowd P."/>
            <person name="Eaton D."/>
            <person name="Foster J.S."/>
            <person name="Grimaldi C."/>
            <person name="Gu Q."/>
            <person name="Hass P.E."/>
            <person name="Heldens S."/>
            <person name="Huang A."/>
            <person name="Kim H.S."/>
            <person name="Klimowski L."/>
            <person name="Jin Y."/>
            <person name="Johnson S."/>
            <person name="Lee J."/>
            <person name="Lewis L."/>
            <person name="Liao D."/>
            <person name="Mark M.R."/>
            <person name="Robbie E."/>
            <person name="Sanchez C."/>
            <person name="Schoenfeld J."/>
            <person name="Seshagiri S."/>
            <person name="Simmons L."/>
            <person name="Singh J."/>
            <person name="Smith V."/>
            <person name="Stinson J."/>
            <person name="Vagts A."/>
            <person name="Vandlen R.L."/>
            <person name="Watanabe C."/>
            <person name="Wieand D."/>
            <person name="Woods K."/>
            <person name="Xie M.-H."/>
            <person name="Yansura D.G."/>
            <person name="Yi S."/>
            <person name="Yu G."/>
            <person name="Yuan J."/>
            <person name="Zhang M."/>
            <person name="Zhang Z."/>
            <person name="Goddard A.D."/>
            <person name="Wood W.I."/>
            <person name="Godowski P.J."/>
            <person name="Gray A.M."/>
        </authorList>
    </citation>
    <scope>NUCLEOTIDE SEQUENCE [LARGE SCALE MRNA]</scope>
</reference>
<reference key="2">
    <citation type="submission" date="2005-07" db="EMBL/GenBank/DDBJ databases">
        <authorList>
            <person name="Mural R.J."/>
            <person name="Istrail S."/>
            <person name="Sutton G.G."/>
            <person name="Florea L."/>
            <person name="Halpern A.L."/>
            <person name="Mobarry C.M."/>
            <person name="Lippert R."/>
            <person name="Walenz B."/>
            <person name="Shatkay H."/>
            <person name="Dew I."/>
            <person name="Miller J.R."/>
            <person name="Flanigan M.J."/>
            <person name="Edwards N.J."/>
            <person name="Bolanos R."/>
            <person name="Fasulo D."/>
            <person name="Halldorsson B.V."/>
            <person name="Hannenhalli S."/>
            <person name="Turner R."/>
            <person name="Yooseph S."/>
            <person name="Lu F."/>
            <person name="Nusskern D.R."/>
            <person name="Shue B.C."/>
            <person name="Zheng X.H."/>
            <person name="Zhong F."/>
            <person name="Delcher A.L."/>
            <person name="Huson D.H."/>
            <person name="Kravitz S.A."/>
            <person name="Mouchard L."/>
            <person name="Reinert K."/>
            <person name="Remington K.A."/>
            <person name="Clark A.G."/>
            <person name="Waterman M.S."/>
            <person name="Eichler E.E."/>
            <person name="Adams M.D."/>
            <person name="Hunkapiller M.W."/>
            <person name="Myers E.W."/>
            <person name="Venter J.C."/>
        </authorList>
    </citation>
    <scope>NUCLEOTIDE SEQUENCE [LARGE SCALE GENOMIC DNA]</scope>
</reference>
<reference key="3">
    <citation type="journal article" date="2004" name="Genome Res.">
        <title>The status, quality, and expansion of the NIH full-length cDNA project: the Mammalian Gene Collection (MGC).</title>
        <authorList>
            <consortium name="The MGC Project Team"/>
        </authorList>
    </citation>
    <scope>NUCLEOTIDE SEQUENCE [LARGE SCALE MRNA]</scope>
</reference>
<reference key="4">
    <citation type="journal article" date="2011" name="Osteoarthritis Cartilage">
        <title>Snorc is a novel cartilage specific small membrane proteoglycan expressed in differentiating and articular chondrocytes.</title>
        <authorList>
            <person name="Heinonen J."/>
            <person name="Taipaleenmaeki H."/>
            <person name="Roering P."/>
            <person name="Takatalo M."/>
            <person name="Harkness L."/>
            <person name="Sandholm J."/>
            <person name="Uusitalo-Jaervinen H."/>
            <person name="Kassem M."/>
            <person name="Kiviranta I."/>
            <person name="Laitala-Leinonen T."/>
            <person name="Saeaemaenen A.M."/>
        </authorList>
    </citation>
    <scope>TISSUE SPECIFICITY</scope>
</reference>
<dbReference type="EMBL" id="AY358535">
    <property type="protein sequence ID" value="AAQ88899.1"/>
    <property type="molecule type" value="mRNA"/>
</dbReference>
<dbReference type="EMBL" id="CH471063">
    <property type="protein sequence ID" value="EAW71022.1"/>
    <property type="molecule type" value="Genomic_DNA"/>
</dbReference>
<dbReference type="EMBL" id="BC130307">
    <property type="protein sequence ID" value="AAI30308.1"/>
    <property type="molecule type" value="mRNA"/>
</dbReference>
<dbReference type="EMBL" id="BC130309">
    <property type="protein sequence ID" value="AAI30310.1"/>
    <property type="molecule type" value="mRNA"/>
</dbReference>
<dbReference type="CCDS" id="CCDS2499.1"/>
<dbReference type="RefSeq" id="NP_001333049.2">
    <property type="nucleotide sequence ID" value="NM_001346120.3"/>
</dbReference>
<dbReference type="RefSeq" id="NP_001333051.1">
    <property type="nucleotide sequence ID" value="NM_001346122.2"/>
</dbReference>
<dbReference type="RefSeq" id="NP_001381135.1">
    <property type="nucleotide sequence ID" value="NM_001394206.1"/>
</dbReference>
<dbReference type="RefSeq" id="NP_001381136.1">
    <property type="nucleotide sequence ID" value="NM_001394207.1"/>
</dbReference>
<dbReference type="RefSeq" id="NP_996778.1">
    <property type="nucleotide sequence ID" value="NM_206895.3"/>
</dbReference>
<dbReference type="RefSeq" id="XP_016859571.1">
    <property type="nucleotide sequence ID" value="XM_017004082.1"/>
</dbReference>
<dbReference type="RefSeq" id="XP_016859572.1">
    <property type="nucleotide sequence ID" value="XM_017004083.3"/>
</dbReference>
<dbReference type="RefSeq" id="XP_016859573.1">
    <property type="nucleotide sequence ID" value="XM_017004084.1"/>
</dbReference>
<dbReference type="RefSeq" id="XP_054197959.1">
    <property type="nucleotide sequence ID" value="XM_054341984.1"/>
</dbReference>
<dbReference type="SMR" id="Q6UX34"/>
<dbReference type="BioGRID" id="132963">
    <property type="interactions" value="26"/>
</dbReference>
<dbReference type="FunCoup" id="Q6UX34">
    <property type="interactions" value="14"/>
</dbReference>
<dbReference type="IntAct" id="Q6UX34">
    <property type="interactions" value="22"/>
</dbReference>
<dbReference type="GlyGen" id="Q6UX34">
    <property type="glycosylation" value="1 site"/>
</dbReference>
<dbReference type="PhosphoSitePlus" id="Q6UX34"/>
<dbReference type="BioMuta" id="C2orf82"/>
<dbReference type="DMDM" id="74738172"/>
<dbReference type="PaxDb" id="9606-ENSP00000386804"/>
<dbReference type="PeptideAtlas" id="Q6UX34"/>
<dbReference type="Antibodypedia" id="65848">
    <property type="antibodies" value="6 antibodies from 6 providers"/>
</dbReference>
<dbReference type="DNASU" id="389084"/>
<dbReference type="Ensembl" id="ENST00000331342.5">
    <property type="protein sequence ID" value="ENSP00000333208.2"/>
    <property type="gene ID" value="ENSG00000182600.10"/>
</dbReference>
<dbReference type="Ensembl" id="ENST00000409230.5">
    <property type="protein sequence ID" value="ENSP00000386804.1"/>
    <property type="gene ID" value="ENSG00000182600.10"/>
</dbReference>
<dbReference type="Ensembl" id="ENST00000409533.5">
    <property type="protein sequence ID" value="ENSP00000387130.1"/>
    <property type="gene ID" value="ENSG00000182600.10"/>
</dbReference>
<dbReference type="Ensembl" id="ENST00000695538.1">
    <property type="protein sequence ID" value="ENSP00000511992.1"/>
    <property type="gene ID" value="ENSG00000182600.10"/>
</dbReference>
<dbReference type="GeneID" id="389084"/>
<dbReference type="KEGG" id="hsa:389084"/>
<dbReference type="MANE-Select" id="ENST00000331342.5">
    <property type="protein sequence ID" value="ENSP00000333208.2"/>
    <property type="RefSeq nucleotide sequence ID" value="NM_001394206.1"/>
    <property type="RefSeq protein sequence ID" value="NP_001381135.1"/>
</dbReference>
<dbReference type="UCSC" id="uc002vtr.1">
    <property type="organism name" value="human"/>
</dbReference>
<dbReference type="AGR" id="HGNC:33763"/>
<dbReference type="CTD" id="389084"/>
<dbReference type="DisGeNET" id="389084"/>
<dbReference type="GeneCards" id="SNORC"/>
<dbReference type="HGNC" id="HGNC:33763">
    <property type="gene designation" value="SNORC"/>
</dbReference>
<dbReference type="HPA" id="ENSG00000182600">
    <property type="expression patterns" value="Group enriched (brain, skin)"/>
</dbReference>
<dbReference type="MIM" id="620882">
    <property type="type" value="gene"/>
</dbReference>
<dbReference type="neXtProt" id="NX_Q6UX34"/>
<dbReference type="OpenTargets" id="ENSG00000182600"/>
<dbReference type="PharmGKB" id="PA162379659"/>
<dbReference type="VEuPathDB" id="HostDB:ENSG00000182600"/>
<dbReference type="eggNOG" id="ENOG502S8U6">
    <property type="taxonomic scope" value="Eukaryota"/>
</dbReference>
<dbReference type="GeneTree" id="ENSGT00390000008993"/>
<dbReference type="HOGENOM" id="CLU_166240_0_0_1"/>
<dbReference type="InParanoid" id="Q6UX34"/>
<dbReference type="OMA" id="WNEPIEL"/>
<dbReference type="OrthoDB" id="8941387at2759"/>
<dbReference type="PAN-GO" id="Q6UX34">
    <property type="GO annotations" value="1 GO annotation based on evolutionary models"/>
</dbReference>
<dbReference type="PhylomeDB" id="Q6UX34"/>
<dbReference type="TreeFam" id="TF338619"/>
<dbReference type="PathwayCommons" id="Q6UX34"/>
<dbReference type="SignaLink" id="Q6UX34"/>
<dbReference type="BioGRID-ORCS" id="389084">
    <property type="hits" value="12 hits in 1131 CRISPR screens"/>
</dbReference>
<dbReference type="ChiTaRS" id="C2orf82">
    <property type="organism name" value="human"/>
</dbReference>
<dbReference type="GenomeRNAi" id="389084"/>
<dbReference type="Pharos" id="Q6UX34">
    <property type="development level" value="Tdark"/>
</dbReference>
<dbReference type="PRO" id="PR:Q6UX34"/>
<dbReference type="Proteomes" id="UP000005640">
    <property type="component" value="Chromosome 2"/>
</dbReference>
<dbReference type="RNAct" id="Q6UX34">
    <property type="molecule type" value="protein"/>
</dbReference>
<dbReference type="Bgee" id="ENSG00000182600">
    <property type="expression patterns" value="Expressed in spinal cord and 138 other cell types or tissues"/>
</dbReference>
<dbReference type="ExpressionAtlas" id="Q6UX34">
    <property type="expression patterns" value="baseline and differential"/>
</dbReference>
<dbReference type="GO" id="GO:0071944">
    <property type="term" value="C:cell periphery"/>
    <property type="evidence" value="ECO:0000250"/>
    <property type="project" value="UniProtKB"/>
</dbReference>
<dbReference type="GO" id="GO:0005737">
    <property type="term" value="C:cytoplasm"/>
    <property type="evidence" value="ECO:0007669"/>
    <property type="project" value="UniProtKB-SubCell"/>
</dbReference>
<dbReference type="GO" id="GO:0005576">
    <property type="term" value="C:extracellular region"/>
    <property type="evidence" value="ECO:0007669"/>
    <property type="project" value="UniProtKB-KW"/>
</dbReference>
<dbReference type="GO" id="GO:0016020">
    <property type="term" value="C:membrane"/>
    <property type="evidence" value="ECO:0007669"/>
    <property type="project" value="UniProtKB-SubCell"/>
</dbReference>
<dbReference type="GO" id="GO:0051216">
    <property type="term" value="P:cartilage development"/>
    <property type="evidence" value="ECO:0000250"/>
    <property type="project" value="UniProtKB"/>
</dbReference>
<dbReference type="InterPro" id="IPR031500">
    <property type="entry name" value="SNORC"/>
</dbReference>
<dbReference type="PANTHER" id="PTHR28453">
    <property type="entry name" value="PROTEIN SNORC"/>
    <property type="match status" value="1"/>
</dbReference>
<dbReference type="PANTHER" id="PTHR28453:SF1">
    <property type="entry name" value="PROTEIN SNORC"/>
    <property type="match status" value="1"/>
</dbReference>
<dbReference type="Pfam" id="PF15756">
    <property type="entry name" value="DUF4690"/>
    <property type="match status" value="1"/>
</dbReference>
<organism>
    <name type="scientific">Homo sapiens</name>
    <name type="common">Human</name>
    <dbReference type="NCBI Taxonomy" id="9606"/>
    <lineage>
        <taxon>Eukaryota</taxon>
        <taxon>Metazoa</taxon>
        <taxon>Chordata</taxon>
        <taxon>Craniata</taxon>
        <taxon>Vertebrata</taxon>
        <taxon>Euteleostomi</taxon>
        <taxon>Mammalia</taxon>
        <taxon>Eutheria</taxon>
        <taxon>Euarchontoglires</taxon>
        <taxon>Primates</taxon>
        <taxon>Haplorrhini</taxon>
        <taxon>Catarrhini</taxon>
        <taxon>Hominidae</taxon>
        <taxon>Homo</taxon>
    </lineage>
</organism>
<gene>
    <name evidence="7" type="primary">SNORC</name>
    <name type="synonym">C2orf82</name>
    <name type="ORF">UNQ830/PRO1757</name>
</gene>
<feature type="signal peptide" evidence="2">
    <location>
        <begin position="1"/>
        <end position="24"/>
    </location>
</feature>
<feature type="chain" id="PRO_0000317641" description="Protein SNORC">
    <location>
        <begin position="25"/>
        <end position="121"/>
    </location>
</feature>
<feature type="topological domain" description="Extracellular" evidence="6">
    <location>
        <begin position="25"/>
        <end position="92"/>
    </location>
</feature>
<feature type="transmembrane region" description="Helical" evidence="2">
    <location>
        <begin position="93"/>
        <end position="113"/>
    </location>
</feature>
<feature type="topological domain" description="Cytoplasmic" evidence="6">
    <location>
        <begin position="114"/>
        <end position="121"/>
    </location>
</feature>
<feature type="region of interest" description="Disordered" evidence="3">
    <location>
        <begin position="28"/>
        <end position="84"/>
    </location>
</feature>
<sequence>MASCLALRMALLLVSGVLAPAVLTDDVPQEPVPTLWNEPAELPSGEGPVESTSPGREPVDTGPPAPTVAPGPEDSTAQERLDQGGGSLGPGAIAAIVIAALLATCVVLALVVVALRKFSAS</sequence>
<proteinExistence type="evidence at protein level"/>
<name>SNORC_HUMAN</name>